<gene>
    <name evidence="1" type="primary">infC</name>
    <name type="ordered locus">E2348C_1847</name>
</gene>
<accession>B7USA1</accession>
<dbReference type="EMBL" id="FM180568">
    <property type="protein sequence ID" value="CAS09395.1"/>
    <property type="molecule type" value="Genomic_DNA"/>
</dbReference>
<dbReference type="RefSeq" id="WP_001700733.1">
    <property type="nucleotide sequence ID" value="NC_011601.1"/>
</dbReference>
<dbReference type="BMRB" id="B7USA1"/>
<dbReference type="SMR" id="B7USA1"/>
<dbReference type="GeneID" id="93775931"/>
<dbReference type="KEGG" id="ecg:E2348C_1847"/>
<dbReference type="HOGENOM" id="CLU_054919_3_2_6"/>
<dbReference type="Proteomes" id="UP000008205">
    <property type="component" value="Chromosome"/>
</dbReference>
<dbReference type="GO" id="GO:0005829">
    <property type="term" value="C:cytosol"/>
    <property type="evidence" value="ECO:0007669"/>
    <property type="project" value="TreeGrafter"/>
</dbReference>
<dbReference type="GO" id="GO:0016020">
    <property type="term" value="C:membrane"/>
    <property type="evidence" value="ECO:0007669"/>
    <property type="project" value="TreeGrafter"/>
</dbReference>
<dbReference type="GO" id="GO:0043022">
    <property type="term" value="F:ribosome binding"/>
    <property type="evidence" value="ECO:0007669"/>
    <property type="project" value="TreeGrafter"/>
</dbReference>
<dbReference type="GO" id="GO:0003743">
    <property type="term" value="F:translation initiation factor activity"/>
    <property type="evidence" value="ECO:0007669"/>
    <property type="project" value="UniProtKB-UniRule"/>
</dbReference>
<dbReference type="GO" id="GO:0032790">
    <property type="term" value="P:ribosome disassembly"/>
    <property type="evidence" value="ECO:0007669"/>
    <property type="project" value="TreeGrafter"/>
</dbReference>
<dbReference type="FunFam" id="3.10.20.80:FF:000001">
    <property type="entry name" value="Translation initiation factor IF-3"/>
    <property type="match status" value="1"/>
</dbReference>
<dbReference type="FunFam" id="3.30.110.10:FF:000001">
    <property type="entry name" value="Translation initiation factor IF-3"/>
    <property type="match status" value="1"/>
</dbReference>
<dbReference type="Gene3D" id="3.30.110.10">
    <property type="entry name" value="Translation initiation factor 3 (IF-3), C-terminal domain"/>
    <property type="match status" value="1"/>
</dbReference>
<dbReference type="Gene3D" id="3.10.20.80">
    <property type="entry name" value="Translation initiation factor 3 (IF-3), N-terminal domain"/>
    <property type="match status" value="1"/>
</dbReference>
<dbReference type="HAMAP" id="MF_00080">
    <property type="entry name" value="IF_3"/>
    <property type="match status" value="1"/>
</dbReference>
<dbReference type="InterPro" id="IPR036788">
    <property type="entry name" value="T_IF-3_C_sf"/>
</dbReference>
<dbReference type="InterPro" id="IPR036787">
    <property type="entry name" value="T_IF-3_N_sf"/>
</dbReference>
<dbReference type="InterPro" id="IPR019813">
    <property type="entry name" value="Translation_initiation_fac3_CS"/>
</dbReference>
<dbReference type="InterPro" id="IPR001288">
    <property type="entry name" value="Translation_initiation_fac_3"/>
</dbReference>
<dbReference type="InterPro" id="IPR019815">
    <property type="entry name" value="Translation_initiation_fac_3_C"/>
</dbReference>
<dbReference type="InterPro" id="IPR019814">
    <property type="entry name" value="Translation_initiation_fac_3_N"/>
</dbReference>
<dbReference type="NCBIfam" id="TIGR00168">
    <property type="entry name" value="infC"/>
    <property type="match status" value="1"/>
</dbReference>
<dbReference type="PANTHER" id="PTHR10938">
    <property type="entry name" value="TRANSLATION INITIATION FACTOR IF-3"/>
    <property type="match status" value="1"/>
</dbReference>
<dbReference type="PANTHER" id="PTHR10938:SF0">
    <property type="entry name" value="TRANSLATION INITIATION FACTOR IF-3, MITOCHONDRIAL"/>
    <property type="match status" value="1"/>
</dbReference>
<dbReference type="Pfam" id="PF00707">
    <property type="entry name" value="IF3_C"/>
    <property type="match status" value="1"/>
</dbReference>
<dbReference type="Pfam" id="PF05198">
    <property type="entry name" value="IF3_N"/>
    <property type="match status" value="1"/>
</dbReference>
<dbReference type="SUPFAM" id="SSF55200">
    <property type="entry name" value="Translation initiation factor IF3, C-terminal domain"/>
    <property type="match status" value="1"/>
</dbReference>
<dbReference type="SUPFAM" id="SSF54364">
    <property type="entry name" value="Translation initiation factor IF3, N-terminal domain"/>
    <property type="match status" value="1"/>
</dbReference>
<dbReference type="PROSITE" id="PS00938">
    <property type="entry name" value="IF3"/>
    <property type="match status" value="1"/>
</dbReference>
<organism>
    <name type="scientific">Escherichia coli O127:H6 (strain E2348/69 / EPEC)</name>
    <dbReference type="NCBI Taxonomy" id="574521"/>
    <lineage>
        <taxon>Bacteria</taxon>
        <taxon>Pseudomonadati</taxon>
        <taxon>Pseudomonadota</taxon>
        <taxon>Gammaproteobacteria</taxon>
        <taxon>Enterobacterales</taxon>
        <taxon>Enterobacteriaceae</taxon>
        <taxon>Escherichia</taxon>
    </lineage>
</organism>
<protein>
    <recommendedName>
        <fullName evidence="1">Translation initiation factor IF-3</fullName>
    </recommendedName>
</protein>
<comment type="function">
    <text evidence="1">IF-3 binds to the 30S ribosomal subunit and shifts the equilibrium between 70S ribosomes and their 50S and 30S subunits in favor of the free subunits, thus enhancing the availability of 30S subunits on which protein synthesis initiation begins.</text>
</comment>
<comment type="subunit">
    <text evidence="1">Monomer.</text>
</comment>
<comment type="subcellular location">
    <subcellularLocation>
        <location evidence="1">Cytoplasm</location>
    </subcellularLocation>
</comment>
<comment type="similarity">
    <text evidence="1">Belongs to the IF-3 family.</text>
</comment>
<name>IF3_ECO27</name>
<reference key="1">
    <citation type="journal article" date="2009" name="J. Bacteriol.">
        <title>Complete genome sequence and comparative genome analysis of enteropathogenic Escherichia coli O127:H6 strain E2348/69.</title>
        <authorList>
            <person name="Iguchi A."/>
            <person name="Thomson N.R."/>
            <person name="Ogura Y."/>
            <person name="Saunders D."/>
            <person name="Ooka T."/>
            <person name="Henderson I.R."/>
            <person name="Harris D."/>
            <person name="Asadulghani M."/>
            <person name="Kurokawa K."/>
            <person name="Dean P."/>
            <person name="Kenny B."/>
            <person name="Quail M.A."/>
            <person name="Thurston S."/>
            <person name="Dougan G."/>
            <person name="Hayashi T."/>
            <person name="Parkhill J."/>
            <person name="Frankel G."/>
        </authorList>
    </citation>
    <scope>NUCLEOTIDE SEQUENCE [LARGE SCALE GENOMIC DNA]</scope>
    <source>
        <strain>E2348/69 / EPEC</strain>
    </source>
</reference>
<proteinExistence type="inferred from homology"/>
<keyword id="KW-0963">Cytoplasm</keyword>
<keyword id="KW-0396">Initiation factor</keyword>
<keyword id="KW-0648">Protein biosynthesis</keyword>
<keyword id="KW-1185">Reference proteome</keyword>
<feature type="chain" id="PRO_1000118267" description="Translation initiation factor IF-3">
    <location>
        <begin position="1"/>
        <end position="180"/>
    </location>
</feature>
<sequence length="180" mass="20564">MKGGKRVQTARPNRINGEIRAQEVRLTGLEGEQLGIVSLREALEKAEEAGVDLVEISPNAEPPVCRIMDYGKFLYEKSKSSKEQKKKQKVIQVKEIKFRPGTDEGDYQVKLRSLIRFLEEGDKAKITLRFRGREMAHQQIGMEVLNRVKDDLQELAVVESFPTKIEGRQMIMVLAPKKKQ</sequence>
<evidence type="ECO:0000255" key="1">
    <source>
        <dbReference type="HAMAP-Rule" id="MF_00080"/>
    </source>
</evidence>